<dbReference type="EMBL" id="X57970">
    <property type="protein sequence ID" value="CAA41036.1"/>
    <property type="molecule type" value="mRNA"/>
</dbReference>
<dbReference type="PIR" id="S25764">
    <property type="entry name" value="S25764"/>
</dbReference>
<dbReference type="RefSeq" id="NP_077352.1">
    <property type="nucleotide sequence ID" value="NM_024376.2"/>
</dbReference>
<dbReference type="SMR" id="P29414"/>
<dbReference type="FunCoup" id="P29414">
    <property type="interactions" value="14"/>
</dbReference>
<dbReference type="STRING" id="10116.ENSRNOP00000011699"/>
<dbReference type="PhosphoSitePlus" id="P29414"/>
<dbReference type="PaxDb" id="10116-ENSRNOP00000011699"/>
<dbReference type="GeneID" id="79217"/>
<dbReference type="KEGG" id="rno:79217"/>
<dbReference type="UCSC" id="RGD:621820">
    <property type="organism name" value="rat"/>
</dbReference>
<dbReference type="AGR" id="RGD:621820"/>
<dbReference type="CTD" id="2700"/>
<dbReference type="RGD" id="621820">
    <property type="gene designation" value="Gja3"/>
</dbReference>
<dbReference type="eggNOG" id="ENOG502QUKJ">
    <property type="taxonomic scope" value="Eukaryota"/>
</dbReference>
<dbReference type="InParanoid" id="P29414"/>
<dbReference type="OrthoDB" id="9930281at2759"/>
<dbReference type="PhylomeDB" id="P29414"/>
<dbReference type="Reactome" id="R-RNO-190861">
    <property type="pathway name" value="Gap junction assembly"/>
</dbReference>
<dbReference type="PRO" id="PR:P29414"/>
<dbReference type="Proteomes" id="UP000002494">
    <property type="component" value="Unplaced"/>
</dbReference>
<dbReference type="GO" id="GO:0005922">
    <property type="term" value="C:connexin complex"/>
    <property type="evidence" value="ECO:0000250"/>
    <property type="project" value="UniProtKB"/>
</dbReference>
<dbReference type="GO" id="GO:0005921">
    <property type="term" value="C:gap junction"/>
    <property type="evidence" value="ECO:0000314"/>
    <property type="project" value="RGD"/>
</dbReference>
<dbReference type="GO" id="GO:0005886">
    <property type="term" value="C:plasma membrane"/>
    <property type="evidence" value="ECO:0000250"/>
    <property type="project" value="UniProtKB"/>
</dbReference>
<dbReference type="GO" id="GO:0005243">
    <property type="term" value="F:gap junction channel activity"/>
    <property type="evidence" value="ECO:0000314"/>
    <property type="project" value="RGD"/>
</dbReference>
<dbReference type="GO" id="GO:0055077">
    <property type="term" value="F:gap junction hemi-channel activity"/>
    <property type="evidence" value="ECO:0000314"/>
    <property type="project" value="UniProtKB"/>
</dbReference>
<dbReference type="GO" id="GO:0042802">
    <property type="term" value="F:identical protein binding"/>
    <property type="evidence" value="ECO:0000314"/>
    <property type="project" value="RGD"/>
</dbReference>
<dbReference type="GO" id="GO:0007267">
    <property type="term" value="P:cell-cell signaling"/>
    <property type="evidence" value="ECO:0000318"/>
    <property type="project" value="GO_Central"/>
</dbReference>
<dbReference type="GO" id="GO:1990349">
    <property type="term" value="P:gap junction-mediated intercellular transport"/>
    <property type="evidence" value="ECO:0000250"/>
    <property type="project" value="UniProtKB"/>
</dbReference>
<dbReference type="GO" id="GO:0042542">
    <property type="term" value="P:response to hydrogen peroxide"/>
    <property type="evidence" value="ECO:0000314"/>
    <property type="project" value="RGD"/>
</dbReference>
<dbReference type="GO" id="GO:0009268">
    <property type="term" value="P:response to pH"/>
    <property type="evidence" value="ECO:0000314"/>
    <property type="project" value="RGD"/>
</dbReference>
<dbReference type="GO" id="GO:0007601">
    <property type="term" value="P:visual perception"/>
    <property type="evidence" value="ECO:0007669"/>
    <property type="project" value="InterPro"/>
</dbReference>
<dbReference type="FunFam" id="1.20.1440.80:FF:000002">
    <property type="entry name" value="Gap junction protein"/>
    <property type="match status" value="1"/>
</dbReference>
<dbReference type="Gene3D" id="1.20.1440.80">
    <property type="entry name" value="Gap junction channel protein cysteine-rich domain"/>
    <property type="match status" value="1"/>
</dbReference>
<dbReference type="InterPro" id="IPR000500">
    <property type="entry name" value="Connexin"/>
</dbReference>
<dbReference type="InterPro" id="IPR002262">
    <property type="entry name" value="Connexin46"/>
</dbReference>
<dbReference type="InterPro" id="IPR034634">
    <property type="entry name" value="Connexin_C"/>
</dbReference>
<dbReference type="InterPro" id="IPR019570">
    <property type="entry name" value="Connexin_CCC"/>
</dbReference>
<dbReference type="InterPro" id="IPR017990">
    <property type="entry name" value="Connexin_CS"/>
</dbReference>
<dbReference type="InterPro" id="IPR013092">
    <property type="entry name" value="Connexin_N"/>
</dbReference>
<dbReference type="InterPro" id="IPR038359">
    <property type="entry name" value="Connexin_N_sf"/>
</dbReference>
<dbReference type="PANTHER" id="PTHR11984">
    <property type="entry name" value="CONNEXIN"/>
    <property type="match status" value="1"/>
</dbReference>
<dbReference type="PANTHER" id="PTHR11984:SF12">
    <property type="entry name" value="GAP JUNCTION ALPHA-3 PROTEIN"/>
    <property type="match status" value="1"/>
</dbReference>
<dbReference type="Pfam" id="PF00029">
    <property type="entry name" value="Connexin"/>
    <property type="match status" value="1"/>
</dbReference>
<dbReference type="PRINTS" id="PR00206">
    <property type="entry name" value="CONNEXIN"/>
</dbReference>
<dbReference type="PRINTS" id="PR01133">
    <property type="entry name" value="CONNEXINA3"/>
</dbReference>
<dbReference type="SMART" id="SM00037">
    <property type="entry name" value="CNX"/>
    <property type="match status" value="1"/>
</dbReference>
<dbReference type="SMART" id="SM01089">
    <property type="entry name" value="Connexin_CCC"/>
    <property type="match status" value="1"/>
</dbReference>
<dbReference type="SUPFAM" id="SSF118220">
    <property type="entry name" value="Connexin43"/>
    <property type="match status" value="1"/>
</dbReference>
<dbReference type="PROSITE" id="PS00407">
    <property type="entry name" value="CONNEXINS_1"/>
    <property type="match status" value="1"/>
</dbReference>
<dbReference type="PROSITE" id="PS00408">
    <property type="entry name" value="CONNEXINS_2"/>
    <property type="match status" value="1"/>
</dbReference>
<reference key="1">
    <citation type="journal article" date="1991" name="J. Cell Biol.">
        <title>Connexin46, a novel lens gap junction protein, induces voltage-gated currents in nonjunctional plasma membrane of Xenopus oocytes.</title>
        <authorList>
            <person name="Paul D.L."/>
            <person name="Ebihara L."/>
            <person name="Takemoto L.J."/>
            <person name="Swenson K.I."/>
            <person name="Goodenough D.A."/>
        </authorList>
    </citation>
    <scope>NUCLEOTIDE SEQUENCE [MRNA]</scope>
    <scope>TISSUE SPECIFICITY</scope>
    <scope>SUBCELLULAR LOCATION</scope>
    <scope>FUNCTION</scope>
    <source>
        <strain>CD Charles River</strain>
        <tissue>Lens</tissue>
    </source>
</reference>
<evidence type="ECO:0000250" key="1">
    <source>
        <dbReference type="UniProtKB" id="Q9TU17"/>
    </source>
</evidence>
<evidence type="ECO:0000256" key="2">
    <source>
        <dbReference type="SAM" id="MobiDB-lite"/>
    </source>
</evidence>
<evidence type="ECO:0000269" key="3">
    <source>
    </source>
</evidence>
<evidence type="ECO:0000303" key="4">
    <source>
    </source>
</evidence>
<evidence type="ECO:0000305" key="5"/>
<evidence type="ECO:0000305" key="6">
    <source>
    </source>
</evidence>
<name>CXA3_RAT</name>
<comment type="function">
    <text evidence="1 6">Structural component of lens fiber gap junctions (Probable). Gap junctions are dodecameric channels that connect the cytoplasm of adjoining cells. They are formed by the docking of two hexameric hemichannels, one from each cell membrane (By similarity). Small molecules and ions diffuse from one cell to a neighboring cell via the central pore (Probable).</text>
</comment>
<comment type="subunit">
    <text evidence="1">A hemichannel or connexon is composed of a hexamer of connexins. A functional gap junction is formed by the apposition of two hemichannels. Forms heteromeric channels with GJA8.</text>
</comment>
<comment type="subcellular location">
    <subcellularLocation>
        <location evidence="3">Cell membrane</location>
        <topology evidence="1">Multi-pass membrane protein</topology>
    </subcellularLocation>
    <subcellularLocation>
        <location evidence="1">Cell junction</location>
        <location evidence="1">Gap junction</location>
    </subcellularLocation>
</comment>
<comment type="tissue specificity">
    <text evidence="3">Detected in eye lens (at protein level). Most abundant in lens, but also present in heart and kidney.</text>
</comment>
<comment type="similarity">
    <text evidence="5">Belongs to the connexin family. Alpha-type (group II) subfamily.</text>
</comment>
<gene>
    <name type="primary">Gja3</name>
    <name type="synonym">Cxn-46</name>
</gene>
<organism>
    <name type="scientific">Rattus norvegicus</name>
    <name type="common">Rat</name>
    <dbReference type="NCBI Taxonomy" id="10116"/>
    <lineage>
        <taxon>Eukaryota</taxon>
        <taxon>Metazoa</taxon>
        <taxon>Chordata</taxon>
        <taxon>Craniata</taxon>
        <taxon>Vertebrata</taxon>
        <taxon>Euteleostomi</taxon>
        <taxon>Mammalia</taxon>
        <taxon>Eutheria</taxon>
        <taxon>Euarchontoglires</taxon>
        <taxon>Glires</taxon>
        <taxon>Rodentia</taxon>
        <taxon>Myomorpha</taxon>
        <taxon>Muroidea</taxon>
        <taxon>Muridae</taxon>
        <taxon>Murinae</taxon>
        <taxon>Rattus</taxon>
    </lineage>
</organism>
<accession>P29414</accession>
<protein>
    <recommendedName>
        <fullName>Gap junction alpha-3 protein</fullName>
    </recommendedName>
    <alternativeName>
        <fullName>Connexin-46</fullName>
        <shortName evidence="4">Cx46</shortName>
    </alternativeName>
</protein>
<sequence length="416" mass="46013">MGDWSFLGRLLENAQEHSTVIGKVWLTVLFIFRILVLGAAAEEVWGDEQSDFTCNTQQPGCENVCYDRAFPISHIRFWALQIIFVSTPTLIYLGHVLHIVRMEEKKKEREEELLRRDNPQHGRGREPMRTGSPRDPPLRDDRGKVRIAGALLRTYVFNIIFKTLFEVGFIAGQYFLYGFQLQPLYRCDRWPCPNTVDCFISRPTEKTIFVIFMLAVACASLVLNMLEIYHLGWKKLKQGVTNHFNPDASEVRHKPLDPLSEAANSGPPSVSIGLPPYYTHPACPTVQGKATGFPGAPLLPADFTVVTLNDAQGRGHPVKHCNGHHLTTEQNWASLGAEPQTPASKPSSAASSPHGRKGLTDSSGSSLEESALVVTPEGEQALATTVEMHSPPLVLLDPERSSKSSSGRARPGDLAI</sequence>
<proteinExistence type="evidence at protein level"/>
<feature type="initiator methionine" description="Removed" evidence="1">
    <location>
        <position position="1"/>
    </location>
</feature>
<feature type="chain" id="PRO_0000057812" description="Gap junction alpha-3 protein">
    <location>
        <begin position="2"/>
        <end position="416"/>
    </location>
</feature>
<feature type="intramembrane region" evidence="1">
    <location>
        <begin position="2"/>
        <end position="15"/>
    </location>
</feature>
<feature type="topological domain" description="Cytoplasmic" evidence="5">
    <location>
        <begin position="16"/>
        <end position="19"/>
    </location>
</feature>
<feature type="transmembrane region" description="Helical" evidence="1">
    <location>
        <begin position="20"/>
        <end position="40"/>
    </location>
</feature>
<feature type="topological domain" description="Extracellular" evidence="5">
    <location>
        <begin position="41"/>
        <end position="71"/>
    </location>
</feature>
<feature type="transmembrane region" description="Helical" evidence="1">
    <location>
        <begin position="72"/>
        <end position="92"/>
    </location>
</feature>
<feature type="topological domain" description="Cytoplasmic" evidence="5">
    <location>
        <begin position="93"/>
        <end position="158"/>
    </location>
</feature>
<feature type="transmembrane region" description="Helical" evidence="1">
    <location>
        <begin position="159"/>
        <end position="179"/>
    </location>
</feature>
<feature type="topological domain" description="Extracellular" evidence="5">
    <location>
        <begin position="180"/>
        <end position="207"/>
    </location>
</feature>
<feature type="transmembrane region" description="Helical" evidence="1">
    <location>
        <begin position="208"/>
        <end position="228"/>
    </location>
</feature>
<feature type="topological domain" description="Cytoplasmic" evidence="5">
    <location>
        <begin position="229"/>
        <end position="416"/>
    </location>
</feature>
<feature type="region of interest" description="Disordered" evidence="2">
    <location>
        <begin position="110"/>
        <end position="141"/>
    </location>
</feature>
<feature type="region of interest" description="Disordered" evidence="2">
    <location>
        <begin position="336"/>
        <end position="416"/>
    </location>
</feature>
<feature type="compositionally biased region" description="Basic and acidic residues" evidence="2">
    <location>
        <begin position="110"/>
        <end position="128"/>
    </location>
</feature>
<feature type="compositionally biased region" description="Low complexity" evidence="2">
    <location>
        <begin position="342"/>
        <end position="353"/>
    </location>
</feature>
<feature type="disulfide bond" evidence="1">
    <location>
        <begin position="54"/>
        <end position="198"/>
    </location>
</feature>
<feature type="disulfide bond" evidence="1">
    <location>
        <begin position="61"/>
        <end position="192"/>
    </location>
</feature>
<feature type="disulfide bond" evidence="1">
    <location>
        <begin position="65"/>
        <end position="187"/>
    </location>
</feature>
<keyword id="KW-0965">Cell junction</keyword>
<keyword id="KW-1003">Cell membrane</keyword>
<keyword id="KW-1015">Disulfide bond</keyword>
<keyword id="KW-0303">Gap junction</keyword>
<keyword id="KW-0472">Membrane</keyword>
<keyword id="KW-1185">Reference proteome</keyword>
<keyword id="KW-0812">Transmembrane</keyword>
<keyword id="KW-1133">Transmembrane helix</keyword>